<comment type="catalytic activity">
    <reaction evidence="1">
        <text>D-ribulose + ATP = D-ribulose 5-phosphate + ADP + H(+)</text>
        <dbReference type="Rhea" id="RHEA:17601"/>
        <dbReference type="ChEBI" id="CHEBI:15378"/>
        <dbReference type="ChEBI" id="CHEBI:17173"/>
        <dbReference type="ChEBI" id="CHEBI:30616"/>
        <dbReference type="ChEBI" id="CHEBI:58121"/>
        <dbReference type="ChEBI" id="CHEBI:456216"/>
        <dbReference type="EC" id="2.7.1.16"/>
    </reaction>
</comment>
<comment type="catalytic activity">
    <reaction evidence="1">
        <text>L-ribulose + ATP = L-ribulose 5-phosphate + ADP + H(+)</text>
        <dbReference type="Rhea" id="RHEA:22072"/>
        <dbReference type="ChEBI" id="CHEBI:15378"/>
        <dbReference type="ChEBI" id="CHEBI:16880"/>
        <dbReference type="ChEBI" id="CHEBI:30616"/>
        <dbReference type="ChEBI" id="CHEBI:58226"/>
        <dbReference type="ChEBI" id="CHEBI:456216"/>
        <dbReference type="EC" id="2.7.1.16"/>
    </reaction>
</comment>
<comment type="pathway">
    <text evidence="1">Carbohydrate degradation; L-arabinose degradation via L-ribulose; D-xylulose 5-phosphate from L-arabinose (bacterial route): step 2/3.</text>
</comment>
<comment type="similarity">
    <text evidence="1">Belongs to the ribulokinase family.</text>
</comment>
<proteinExistence type="inferred from homology"/>
<feature type="chain" id="PRO_1000050910" description="Ribulokinase">
    <location>
        <begin position="1"/>
        <end position="566"/>
    </location>
</feature>
<evidence type="ECO:0000255" key="1">
    <source>
        <dbReference type="HAMAP-Rule" id="MF_00520"/>
    </source>
</evidence>
<name>ARAB_ECOK1</name>
<keyword id="KW-0054">Arabinose catabolism</keyword>
<keyword id="KW-0067">ATP-binding</keyword>
<keyword id="KW-0119">Carbohydrate metabolism</keyword>
<keyword id="KW-0418">Kinase</keyword>
<keyword id="KW-0547">Nucleotide-binding</keyword>
<keyword id="KW-1185">Reference proteome</keyword>
<keyword id="KW-0808">Transferase</keyword>
<organism>
    <name type="scientific">Escherichia coli O1:K1 / APEC</name>
    <dbReference type="NCBI Taxonomy" id="405955"/>
    <lineage>
        <taxon>Bacteria</taxon>
        <taxon>Pseudomonadati</taxon>
        <taxon>Pseudomonadota</taxon>
        <taxon>Gammaproteobacteria</taxon>
        <taxon>Enterobacterales</taxon>
        <taxon>Enterobacteriaceae</taxon>
        <taxon>Escherichia</taxon>
    </lineage>
</organism>
<sequence length="566" mass="61196">MAIAIGLDFGSDSVRALAVDCATGEEIATSVEWYPRWQKGQFCDAPNNQFRHHPRDYIESMEAALKTVLAELSAEQRAAVVGIGVDTTGSTPAPIDADGNVLALRPEFAENPNAMFVLWKDHTAVEEAEEITRLCHAPGNVDYSRYIGGIYSSEWFWAKILHVTRQDSAVAQSAASWIELCDWVPALLSGTTRPQDIRRGRCSAGHKSLWHESWGGLPPASFFDELDPILNRHLPSPLFTDTWTADIPVGTLCPEWAQRLGLPESVVISGGAFDCHMGAVGAGAQPNALVKVIGTSTCDILIADKQSVGERAVKGICGQVDGSVVPGFIGLEAGQSAFGDIYAWFGRVLSWPLEQLAAQHPELKEQINASQKQLLPALTEAWAKNPSLDHLPVVLDWFNGRRTPNANQRLKGVITDLNLATDAPLLFGGLIAATAFGARAIMECFTDQGIAVNNVMALGGIARKNQVIMQACCDVLNRPLQIVASDQCCALGAAIFAAVAAKVHADIPSAQQKMASAVEKTLQPRSEQAQRFEQLYRRYQQWAMSAEQHYPPTSAPAQAAQAVPTL</sequence>
<reference key="1">
    <citation type="journal article" date="2007" name="J. Bacteriol.">
        <title>The genome sequence of avian pathogenic Escherichia coli strain O1:K1:H7 shares strong similarities with human extraintestinal pathogenic E. coli genomes.</title>
        <authorList>
            <person name="Johnson T.J."/>
            <person name="Kariyawasam S."/>
            <person name="Wannemuehler Y."/>
            <person name="Mangiamele P."/>
            <person name="Johnson S.J."/>
            <person name="Doetkott C."/>
            <person name="Skyberg J.A."/>
            <person name="Lynne A.M."/>
            <person name="Johnson J.R."/>
            <person name="Nolan L.K."/>
        </authorList>
    </citation>
    <scope>NUCLEOTIDE SEQUENCE [LARGE SCALE GENOMIC DNA]</scope>
</reference>
<protein>
    <recommendedName>
        <fullName evidence="1">Ribulokinase</fullName>
        <ecNumber evidence="1">2.7.1.16</ecNumber>
    </recommendedName>
</protein>
<accession>A1A7B0</accession>
<dbReference type="EC" id="2.7.1.16" evidence="1"/>
<dbReference type="EMBL" id="CP000468">
    <property type="protein sequence ID" value="ABI99549.1"/>
    <property type="molecule type" value="Genomic_DNA"/>
</dbReference>
<dbReference type="RefSeq" id="WP_000951841.1">
    <property type="nucleotide sequence ID" value="NZ_CADILS010000013.1"/>
</dbReference>
<dbReference type="SMR" id="A1A7B0"/>
<dbReference type="KEGG" id="ecv:APECO1_1921"/>
<dbReference type="HOGENOM" id="CLU_009281_9_1_6"/>
<dbReference type="UniPathway" id="UPA00145">
    <property type="reaction ID" value="UER00566"/>
</dbReference>
<dbReference type="Proteomes" id="UP000008216">
    <property type="component" value="Chromosome"/>
</dbReference>
<dbReference type="GO" id="GO:0005737">
    <property type="term" value="C:cytoplasm"/>
    <property type="evidence" value="ECO:0007669"/>
    <property type="project" value="TreeGrafter"/>
</dbReference>
<dbReference type="GO" id="GO:0005524">
    <property type="term" value="F:ATP binding"/>
    <property type="evidence" value="ECO:0007669"/>
    <property type="project" value="UniProtKB-KW"/>
</dbReference>
<dbReference type="GO" id="GO:0019150">
    <property type="term" value="F:D-ribulokinase activity"/>
    <property type="evidence" value="ECO:0007669"/>
    <property type="project" value="RHEA"/>
</dbReference>
<dbReference type="GO" id="GO:0008741">
    <property type="term" value="F:ribulokinase activity"/>
    <property type="evidence" value="ECO:0007669"/>
    <property type="project" value="UniProtKB-UniRule"/>
</dbReference>
<dbReference type="GO" id="GO:0019569">
    <property type="term" value="P:L-arabinose catabolic process to xylulose 5-phosphate"/>
    <property type="evidence" value="ECO:0007669"/>
    <property type="project" value="UniProtKB-UniRule"/>
</dbReference>
<dbReference type="CDD" id="cd07781">
    <property type="entry name" value="ASKHA_NBD_FGGY_L-RBK"/>
    <property type="match status" value="1"/>
</dbReference>
<dbReference type="Gene3D" id="1.20.58.2240">
    <property type="match status" value="1"/>
</dbReference>
<dbReference type="Gene3D" id="3.30.420.40">
    <property type="match status" value="1"/>
</dbReference>
<dbReference type="HAMAP" id="MF_00520">
    <property type="entry name" value="Ribulokinase"/>
    <property type="match status" value="1"/>
</dbReference>
<dbReference type="InterPro" id="IPR043129">
    <property type="entry name" value="ATPase_NBD"/>
</dbReference>
<dbReference type="InterPro" id="IPR018485">
    <property type="entry name" value="FGGY_C"/>
</dbReference>
<dbReference type="InterPro" id="IPR005929">
    <property type="entry name" value="Ribulokinase"/>
</dbReference>
<dbReference type="NCBIfam" id="TIGR01234">
    <property type="entry name" value="L-ribulokinase"/>
    <property type="match status" value="1"/>
</dbReference>
<dbReference type="NCBIfam" id="NF003154">
    <property type="entry name" value="PRK04123.1"/>
    <property type="match status" value="1"/>
</dbReference>
<dbReference type="PANTHER" id="PTHR43435:SF4">
    <property type="entry name" value="FGGY CARBOHYDRATE KINASE DOMAIN-CONTAINING PROTEIN"/>
    <property type="match status" value="1"/>
</dbReference>
<dbReference type="PANTHER" id="PTHR43435">
    <property type="entry name" value="RIBULOKINASE"/>
    <property type="match status" value="1"/>
</dbReference>
<dbReference type="Pfam" id="PF02782">
    <property type="entry name" value="FGGY_C"/>
    <property type="match status" value="1"/>
</dbReference>
<dbReference type="SUPFAM" id="SSF53067">
    <property type="entry name" value="Actin-like ATPase domain"/>
    <property type="match status" value="2"/>
</dbReference>
<gene>
    <name evidence="1" type="primary">araB</name>
    <name type="ordered locus">Ecok1_00560</name>
    <name type="ORF">APECO1_1921</name>
</gene>